<sequence length="378" mass="42860">MNIWLNMLTTTGLGAIIGGYTNHLAIKMLFRPHRPIYIGKFQVPFTPGLIPKRRDELAVQLGKMVVEHLLTPEGIGKKLTNEEFQKGLIHWAQVEVDKVIKNEQSLRHMLEKWNVAHVEEEVTQKIEYVITEKIQAFLAEYYTYTWEQALPHSVNEKVENAIPNVSAFILERGISFFESEEGKGRLSKMIDDFFASRGTLLNLVGMFLGNVSVVDRVQPEVIKFLGQDGTKQLLTDVLQKEWEKLKGRDVKELESFVEKEMIVSSVLSAVKVEETVSKFLNQSVQQVCEPVRETIIEKVVPSTVTKGLKWGTENVESILNNLHLAEIVQQEVSTFSTERLEDLVLSITKNELKMITYLGALLGGIIGLVQGLLLLFLR</sequence>
<keyword id="KW-1003">Cell membrane</keyword>
<keyword id="KW-0472">Membrane</keyword>
<keyword id="KW-0812">Transmembrane</keyword>
<keyword id="KW-1133">Transmembrane helix</keyword>
<reference key="1">
    <citation type="submission" date="2008-10" db="EMBL/GenBank/DDBJ databases">
        <title>Genome sequence of Bacillus cereus G9842.</title>
        <authorList>
            <person name="Dodson R.J."/>
            <person name="Durkin A.S."/>
            <person name="Rosovitz M.J."/>
            <person name="Rasko D.A."/>
            <person name="Hoffmaster A."/>
            <person name="Ravel J."/>
            <person name="Sutton G."/>
        </authorList>
    </citation>
    <scope>NUCLEOTIDE SEQUENCE [LARGE SCALE GENOMIC DNA]</scope>
    <source>
        <strain>G9842</strain>
    </source>
</reference>
<name>Y4423_BACC2</name>
<gene>
    <name type="ordered locus">BCG9842_B4423</name>
</gene>
<accession>B7IIB7</accession>
<dbReference type="EMBL" id="CP001186">
    <property type="protein sequence ID" value="ACK95361.1"/>
    <property type="molecule type" value="Genomic_DNA"/>
</dbReference>
<dbReference type="RefSeq" id="WP_012614747.1">
    <property type="nucleotide sequence ID" value="NC_011772.1"/>
</dbReference>
<dbReference type="SMR" id="B7IIB7"/>
<dbReference type="KEGG" id="bcg:BCG9842_B4423"/>
<dbReference type="HOGENOM" id="CLU_042384_0_0_9"/>
<dbReference type="Proteomes" id="UP000006744">
    <property type="component" value="Chromosome"/>
</dbReference>
<dbReference type="GO" id="GO:0005886">
    <property type="term" value="C:plasma membrane"/>
    <property type="evidence" value="ECO:0007669"/>
    <property type="project" value="UniProtKB-SubCell"/>
</dbReference>
<dbReference type="InterPro" id="IPR007383">
    <property type="entry name" value="DUF445"/>
</dbReference>
<dbReference type="InterPro" id="IPR016991">
    <property type="entry name" value="UCP032178"/>
</dbReference>
<dbReference type="PANTHER" id="PTHR35791">
    <property type="entry name" value="UPF0754 MEMBRANE PROTEIN YHEB"/>
    <property type="match status" value="1"/>
</dbReference>
<dbReference type="PANTHER" id="PTHR35791:SF1">
    <property type="entry name" value="UPF0754 MEMBRANE PROTEIN YHEB"/>
    <property type="match status" value="1"/>
</dbReference>
<dbReference type="Pfam" id="PF04286">
    <property type="entry name" value="DUF445"/>
    <property type="match status" value="1"/>
</dbReference>
<dbReference type="PIRSF" id="PIRSF032178">
    <property type="entry name" value="UCP032178"/>
    <property type="match status" value="1"/>
</dbReference>
<feature type="chain" id="PRO_0000388274" description="UPF0754 membrane protein BCG9842_B4423">
    <location>
        <begin position="1"/>
        <end position="378"/>
    </location>
</feature>
<feature type="transmembrane region" description="Helical" evidence="2">
    <location>
        <begin position="357"/>
        <end position="377"/>
    </location>
</feature>
<organism>
    <name type="scientific">Bacillus cereus (strain G9842)</name>
    <dbReference type="NCBI Taxonomy" id="405531"/>
    <lineage>
        <taxon>Bacteria</taxon>
        <taxon>Bacillati</taxon>
        <taxon>Bacillota</taxon>
        <taxon>Bacilli</taxon>
        <taxon>Bacillales</taxon>
        <taxon>Bacillaceae</taxon>
        <taxon>Bacillus</taxon>
        <taxon>Bacillus cereus group</taxon>
    </lineage>
</organism>
<comment type="subcellular location">
    <subcellularLocation>
        <location evidence="1">Cell membrane</location>
        <topology evidence="1">Single-pass membrane protein</topology>
    </subcellularLocation>
</comment>
<comment type="similarity">
    <text evidence="3">Belongs to the UPF0754 family.</text>
</comment>
<evidence type="ECO:0000250" key="1"/>
<evidence type="ECO:0000255" key="2"/>
<evidence type="ECO:0000305" key="3"/>
<protein>
    <recommendedName>
        <fullName>UPF0754 membrane protein BCG9842_B4423</fullName>
    </recommendedName>
</protein>
<proteinExistence type="inferred from homology"/>